<organism>
    <name type="scientific">Laticauda semifasciata</name>
    <name type="common">Black-banded sea krait</name>
    <name type="synonym">Pseudolaticauda semifasciata</name>
    <dbReference type="NCBI Taxonomy" id="8631"/>
    <lineage>
        <taxon>Eukaryota</taxon>
        <taxon>Metazoa</taxon>
        <taxon>Chordata</taxon>
        <taxon>Craniata</taxon>
        <taxon>Vertebrata</taxon>
        <taxon>Euteleostomi</taxon>
        <taxon>Lepidosauria</taxon>
        <taxon>Squamata</taxon>
        <taxon>Bifurcata</taxon>
        <taxon>Unidentata</taxon>
        <taxon>Episquamata</taxon>
        <taxon>Toxicofera</taxon>
        <taxon>Serpentes</taxon>
        <taxon>Colubroidea</taxon>
        <taxon>Elapidae</taxon>
        <taxon>Laticaudinae</taxon>
        <taxon>Laticauda</taxon>
    </lineage>
</organism>
<dbReference type="EC" id="3.1.1.4"/>
<dbReference type="EMBL" id="AB037409">
    <property type="protein sequence ID" value="BAB03296.1"/>
    <property type="molecule type" value="mRNA"/>
</dbReference>
<dbReference type="SMR" id="Q9I847"/>
<dbReference type="GO" id="GO:0005576">
    <property type="term" value="C:extracellular region"/>
    <property type="evidence" value="ECO:0007669"/>
    <property type="project" value="UniProtKB-SubCell"/>
</dbReference>
<dbReference type="GO" id="GO:0005509">
    <property type="term" value="F:calcium ion binding"/>
    <property type="evidence" value="ECO:0007669"/>
    <property type="project" value="InterPro"/>
</dbReference>
<dbReference type="GO" id="GO:0047498">
    <property type="term" value="F:calcium-dependent phospholipase A2 activity"/>
    <property type="evidence" value="ECO:0007669"/>
    <property type="project" value="TreeGrafter"/>
</dbReference>
<dbReference type="GO" id="GO:0005543">
    <property type="term" value="F:phospholipid binding"/>
    <property type="evidence" value="ECO:0007669"/>
    <property type="project" value="TreeGrafter"/>
</dbReference>
<dbReference type="GO" id="GO:0050482">
    <property type="term" value="P:arachidonate secretion"/>
    <property type="evidence" value="ECO:0007669"/>
    <property type="project" value="InterPro"/>
</dbReference>
<dbReference type="GO" id="GO:0016042">
    <property type="term" value="P:lipid catabolic process"/>
    <property type="evidence" value="ECO:0007669"/>
    <property type="project" value="UniProtKB-KW"/>
</dbReference>
<dbReference type="GO" id="GO:0006644">
    <property type="term" value="P:phospholipid metabolic process"/>
    <property type="evidence" value="ECO:0007669"/>
    <property type="project" value="InterPro"/>
</dbReference>
<dbReference type="CDD" id="cd00125">
    <property type="entry name" value="PLA2c"/>
    <property type="match status" value="1"/>
</dbReference>
<dbReference type="FunFam" id="1.20.90.10:FF:000007">
    <property type="entry name" value="Acidic phospholipase A2"/>
    <property type="match status" value="1"/>
</dbReference>
<dbReference type="Gene3D" id="1.20.90.10">
    <property type="entry name" value="Phospholipase A2 domain"/>
    <property type="match status" value="1"/>
</dbReference>
<dbReference type="InterPro" id="IPR001211">
    <property type="entry name" value="PLipase_A2"/>
</dbReference>
<dbReference type="InterPro" id="IPR033112">
    <property type="entry name" value="PLipase_A2_Asp_AS"/>
</dbReference>
<dbReference type="InterPro" id="IPR016090">
    <property type="entry name" value="PLipase_A2_dom"/>
</dbReference>
<dbReference type="InterPro" id="IPR036444">
    <property type="entry name" value="PLipase_A2_dom_sf"/>
</dbReference>
<dbReference type="InterPro" id="IPR033113">
    <property type="entry name" value="PLipase_A2_His_AS"/>
</dbReference>
<dbReference type="PANTHER" id="PTHR11716:SF51">
    <property type="entry name" value="PHOSPHOLIPASE A2"/>
    <property type="match status" value="1"/>
</dbReference>
<dbReference type="PANTHER" id="PTHR11716">
    <property type="entry name" value="PHOSPHOLIPASE A2 FAMILY MEMBER"/>
    <property type="match status" value="1"/>
</dbReference>
<dbReference type="Pfam" id="PF00068">
    <property type="entry name" value="Phospholip_A2_1"/>
    <property type="match status" value="1"/>
</dbReference>
<dbReference type="PRINTS" id="PR00389">
    <property type="entry name" value="PHPHLIPASEA2"/>
</dbReference>
<dbReference type="SMART" id="SM00085">
    <property type="entry name" value="PA2c"/>
    <property type="match status" value="1"/>
</dbReference>
<dbReference type="SUPFAM" id="SSF48619">
    <property type="entry name" value="Phospholipase A2, PLA2"/>
    <property type="match status" value="1"/>
</dbReference>
<dbReference type="PROSITE" id="PS00119">
    <property type="entry name" value="PA2_ASP"/>
    <property type="match status" value="1"/>
</dbReference>
<dbReference type="PROSITE" id="PS00118">
    <property type="entry name" value="PA2_HIS"/>
    <property type="match status" value="1"/>
</dbReference>
<reference key="1">
    <citation type="submission" date="2000-01" db="EMBL/GenBank/DDBJ databases">
        <authorList>
            <person name="Tamiya T."/>
            <person name="Fujimi T.J."/>
        </authorList>
    </citation>
    <scope>NUCLEOTIDE SEQUENCE [MRNA]</scope>
    <source>
        <tissue>Venom gland</tissue>
    </source>
</reference>
<comment type="function">
    <text evidence="1">PLA2 catalyzes the calcium-dependent hydrolysis of the 2-acyl groups in 3-sn-phosphoglycerides.</text>
</comment>
<comment type="catalytic activity">
    <reaction evidence="3 4">
        <text>a 1,2-diacyl-sn-glycero-3-phosphocholine + H2O = a 1-acyl-sn-glycero-3-phosphocholine + a fatty acid + H(+)</text>
        <dbReference type="Rhea" id="RHEA:15801"/>
        <dbReference type="ChEBI" id="CHEBI:15377"/>
        <dbReference type="ChEBI" id="CHEBI:15378"/>
        <dbReference type="ChEBI" id="CHEBI:28868"/>
        <dbReference type="ChEBI" id="CHEBI:57643"/>
        <dbReference type="ChEBI" id="CHEBI:58168"/>
        <dbReference type="EC" id="3.1.1.4"/>
    </reaction>
</comment>
<comment type="cofactor">
    <cofactor evidence="1">
        <name>Ca(2+)</name>
        <dbReference type="ChEBI" id="CHEBI:29108"/>
    </cofactor>
    <text evidence="1">Binds 1 Ca(2+) ion.</text>
</comment>
<comment type="subcellular location">
    <subcellularLocation>
        <location evidence="1">Secreted</location>
    </subcellularLocation>
</comment>
<comment type="tissue specificity">
    <text>Expressed by the venom gland.</text>
</comment>
<comment type="similarity">
    <text evidence="5">Belongs to the phospholipase A2 family. Group I subfamily. D49 sub-subfamily.</text>
</comment>
<proteinExistence type="evidence at transcript level"/>
<feature type="signal peptide" evidence="2">
    <location>
        <begin position="1"/>
        <end position="21"/>
    </location>
</feature>
<feature type="propeptide" id="PRO_0000022898" evidence="1">
    <location>
        <begin position="22"/>
        <end position="27"/>
    </location>
</feature>
<feature type="chain" id="PRO_0000022899" description="Basic phospholipase A2 cL037">
    <location>
        <begin position="28"/>
        <end position="145"/>
    </location>
</feature>
<feature type="active site" evidence="1">
    <location>
        <position position="75"/>
    </location>
</feature>
<feature type="active site" evidence="1">
    <location>
        <position position="119"/>
    </location>
</feature>
<feature type="binding site" evidence="1">
    <location>
        <position position="55"/>
    </location>
    <ligand>
        <name>Ca(2+)</name>
        <dbReference type="ChEBI" id="CHEBI:29108"/>
    </ligand>
</feature>
<feature type="binding site" evidence="1">
    <location>
        <position position="57"/>
    </location>
    <ligand>
        <name>Ca(2+)</name>
        <dbReference type="ChEBI" id="CHEBI:29108"/>
    </ligand>
</feature>
<feature type="binding site" evidence="1">
    <location>
        <position position="59"/>
    </location>
    <ligand>
        <name>Ca(2+)</name>
        <dbReference type="ChEBI" id="CHEBI:29108"/>
    </ligand>
</feature>
<feature type="binding site" evidence="1">
    <location>
        <position position="76"/>
    </location>
    <ligand>
        <name>Ca(2+)</name>
        <dbReference type="ChEBI" id="CHEBI:29108"/>
    </ligand>
</feature>
<feature type="disulfide bond" evidence="1">
    <location>
        <begin position="38"/>
        <end position="98"/>
    </location>
</feature>
<feature type="disulfide bond" evidence="1">
    <location>
        <begin position="54"/>
        <end position="144"/>
    </location>
</feature>
<feature type="disulfide bond" evidence="1">
    <location>
        <begin position="56"/>
        <end position="72"/>
    </location>
</feature>
<feature type="disulfide bond" evidence="1">
    <location>
        <begin position="71"/>
        <end position="125"/>
    </location>
</feature>
<feature type="disulfide bond" evidence="1">
    <location>
        <begin position="78"/>
        <end position="118"/>
    </location>
</feature>
<feature type="disulfide bond" evidence="1">
    <location>
        <begin position="87"/>
        <end position="111"/>
    </location>
</feature>
<feature type="disulfide bond" evidence="1">
    <location>
        <begin position="105"/>
        <end position="116"/>
    </location>
</feature>
<accession>Q9I847</accession>
<name>PA2BA_LATSE</name>
<keyword id="KW-0106">Calcium</keyword>
<keyword id="KW-1015">Disulfide bond</keyword>
<keyword id="KW-0378">Hydrolase</keyword>
<keyword id="KW-0442">Lipid degradation</keyword>
<keyword id="KW-0443">Lipid metabolism</keyword>
<keyword id="KW-0479">Metal-binding</keyword>
<keyword id="KW-0964">Secreted</keyword>
<keyword id="KW-0732">Signal</keyword>
<protein>
    <recommendedName>
        <fullName>Basic phospholipase A2 cL037</fullName>
        <shortName>svPLA2</shortName>
        <ecNumber>3.1.1.4</ecNumber>
    </recommendedName>
    <alternativeName>
        <fullName>Phosphatidylcholine 2-acylhydrolase</fullName>
    </alternativeName>
</protein>
<evidence type="ECO:0000250" key="1"/>
<evidence type="ECO:0000255" key="2"/>
<evidence type="ECO:0000255" key="3">
    <source>
        <dbReference type="PROSITE-ProRule" id="PRU10035"/>
    </source>
</evidence>
<evidence type="ECO:0000255" key="4">
    <source>
        <dbReference type="PROSITE-ProRule" id="PRU10036"/>
    </source>
</evidence>
<evidence type="ECO:0000305" key="5"/>
<sequence length="145" mass="16062">MYPAHLLVLLAVCVSLLGASAILPLPLNLVQFTYLIQCANKGSRASYHYADYGCYCGAGGSGTPVDELDRCCKIHDDCYGEAEKMGCYPKLTMYNYYCGTEGPYCSTKTDCQRYVCACDLQAAKCFARSPYNNKNYNIDTSKRCK</sequence>